<accession>P19177</accession>
<name>H2A_PETCR</name>
<feature type="chain" id="PRO_0000055266" description="Histone H2A">
    <location>
        <begin position="1"/>
        <end position="149"/>
    </location>
</feature>
<feature type="region of interest" description="Disordered" evidence="1">
    <location>
        <begin position="1"/>
        <end position="25"/>
    </location>
</feature>
<feature type="region of interest" description="Disordered" evidence="1">
    <location>
        <begin position="127"/>
        <end position="149"/>
    </location>
</feature>
<feature type="short sequence motif" description="SPKK motif 1">
    <location>
        <begin position="138"/>
        <end position="141"/>
    </location>
</feature>
<feature type="short sequence motif" description="SPKK motif 2">
    <location>
        <begin position="145"/>
        <end position="148"/>
    </location>
</feature>
<feature type="compositionally biased region" description="Basic residues" evidence="1">
    <location>
        <begin position="1"/>
        <end position="23"/>
    </location>
</feature>
<feature type="compositionally biased region" description="Basic and acidic residues" evidence="1">
    <location>
        <begin position="127"/>
        <end position="138"/>
    </location>
</feature>
<proteinExistence type="evidence at transcript level"/>
<organism>
    <name type="scientific">Petroselinum crispum</name>
    <name type="common">Parsley</name>
    <name type="synonym">Petroselinum hortense</name>
    <dbReference type="NCBI Taxonomy" id="4043"/>
    <lineage>
        <taxon>Eukaryota</taxon>
        <taxon>Viridiplantae</taxon>
        <taxon>Streptophyta</taxon>
        <taxon>Embryophyta</taxon>
        <taxon>Tracheophyta</taxon>
        <taxon>Spermatophyta</taxon>
        <taxon>Magnoliopsida</taxon>
        <taxon>eudicotyledons</taxon>
        <taxon>Gunneridae</taxon>
        <taxon>Pentapetalae</taxon>
        <taxon>asterids</taxon>
        <taxon>campanulids</taxon>
        <taxon>Apiales</taxon>
        <taxon>Apiaceae</taxon>
        <taxon>Apioideae</taxon>
        <taxon>apioid superclade</taxon>
        <taxon>Apieae</taxon>
        <taxon>Petroselinum</taxon>
    </lineage>
</organism>
<comment type="function">
    <text>Core component of nucleosome. Nucleosomes wrap and compact DNA into chromatin, limiting DNA accessibility to the cellular machineries which require DNA as a template. Histones thereby play a central role in transcription regulation, DNA repair, DNA replication and chromosomal stability. DNA accessibility is regulated via a complex set of post-translational modifications of histones, also called histone code, and nucleosome remodeling.</text>
</comment>
<comment type="subunit">
    <text>The nucleosome is a histone octamer containing two molecules each of H2A, H2B, H3 and H4 assembled in one H3-H4 heterotetramer and two H2A-H2B heterodimers. The octamer wraps approximately 147 bp of DNA.</text>
</comment>
<comment type="subcellular location">
    <subcellularLocation>
        <location>Nucleus</location>
    </subcellularLocation>
    <subcellularLocation>
        <location>Chromosome</location>
    </subcellularLocation>
</comment>
<comment type="domain">
    <text>Contains 2 SPKK motifs which may interact with the minor groove of A/T-rich DNA sites. Phosphorylation of this motif may regulate DNA binding. This motif is reiterated in both termini of histone H1 and in the N-terminus of sea urchin histones H2B, but its presence in the C-terminus seems to be unique to plant H2A.</text>
</comment>
<comment type="similarity">
    <text evidence="2">Belongs to the histone H2A family.</text>
</comment>
<keyword id="KW-0158">Chromosome</keyword>
<keyword id="KW-0238">DNA-binding</keyword>
<keyword id="KW-0544">Nucleosome core</keyword>
<keyword id="KW-0539">Nucleus</keyword>
<reference key="1">
    <citation type="journal article" date="1990" name="Nucleic Acids Res.">
        <title>Sequence of a histone H2A cDNA from parsley.</title>
        <authorList>
            <person name="Spiker S."/>
            <person name="Weisshaar B."/>
            <person name="da Costa e Silva O."/>
            <person name="Halbrock K."/>
        </authorList>
    </citation>
    <scope>NUCLEOTIDE SEQUENCE [MRNA]</scope>
</reference>
<sequence length="149" mass="15833">METAGKAKKGFGGRKGGPRKKSVTRSVKAGLQFPVGRIGRYLKKGRYAQRVGTGAPVYLAAVLEYLAAEVLELAGNAARDNKKTRIIPRHLLLAVRNDEELGKLLAGVTFAHGGVLPNINPVLLPKKTAEKAAKEPKSPSKAGKSPKKA</sequence>
<evidence type="ECO:0000256" key="1">
    <source>
        <dbReference type="SAM" id="MobiDB-lite"/>
    </source>
</evidence>
<evidence type="ECO:0000305" key="2"/>
<dbReference type="EMBL" id="X53831">
    <property type="protein sequence ID" value="CAA37828.1"/>
    <property type="molecule type" value="mRNA"/>
</dbReference>
<dbReference type="PIR" id="S11498">
    <property type="entry name" value="S11498"/>
</dbReference>
<dbReference type="SMR" id="P19177"/>
<dbReference type="GO" id="GO:0000786">
    <property type="term" value="C:nucleosome"/>
    <property type="evidence" value="ECO:0007669"/>
    <property type="project" value="UniProtKB-KW"/>
</dbReference>
<dbReference type="GO" id="GO:0005634">
    <property type="term" value="C:nucleus"/>
    <property type="evidence" value="ECO:0007669"/>
    <property type="project" value="UniProtKB-SubCell"/>
</dbReference>
<dbReference type="GO" id="GO:0003677">
    <property type="term" value="F:DNA binding"/>
    <property type="evidence" value="ECO:0007669"/>
    <property type="project" value="UniProtKB-KW"/>
</dbReference>
<dbReference type="GO" id="GO:0046982">
    <property type="term" value="F:protein heterodimerization activity"/>
    <property type="evidence" value="ECO:0007669"/>
    <property type="project" value="InterPro"/>
</dbReference>
<dbReference type="GO" id="GO:0030527">
    <property type="term" value="F:structural constituent of chromatin"/>
    <property type="evidence" value="ECO:0007669"/>
    <property type="project" value="InterPro"/>
</dbReference>
<dbReference type="CDD" id="cd00074">
    <property type="entry name" value="HFD_H2A"/>
    <property type="match status" value="1"/>
</dbReference>
<dbReference type="FunFam" id="1.10.20.10:FF:000026">
    <property type="entry name" value="Histone H2A"/>
    <property type="match status" value="1"/>
</dbReference>
<dbReference type="Gene3D" id="1.10.20.10">
    <property type="entry name" value="Histone, subunit A"/>
    <property type="match status" value="1"/>
</dbReference>
<dbReference type="InterPro" id="IPR009072">
    <property type="entry name" value="Histone-fold"/>
</dbReference>
<dbReference type="InterPro" id="IPR002119">
    <property type="entry name" value="Histone_H2A"/>
</dbReference>
<dbReference type="InterPro" id="IPR007125">
    <property type="entry name" value="Histone_H2A/H2B/H3"/>
</dbReference>
<dbReference type="InterPro" id="IPR032454">
    <property type="entry name" value="Histone_H2A_C"/>
</dbReference>
<dbReference type="InterPro" id="IPR032458">
    <property type="entry name" value="Histone_H2A_CS"/>
</dbReference>
<dbReference type="PANTHER" id="PTHR23430">
    <property type="entry name" value="HISTONE H2A"/>
    <property type="match status" value="1"/>
</dbReference>
<dbReference type="Pfam" id="PF00125">
    <property type="entry name" value="Histone"/>
    <property type="match status" value="1"/>
</dbReference>
<dbReference type="Pfam" id="PF16211">
    <property type="entry name" value="Histone_H2A_C"/>
    <property type="match status" value="1"/>
</dbReference>
<dbReference type="PRINTS" id="PR00620">
    <property type="entry name" value="HISTONEH2A"/>
</dbReference>
<dbReference type="SMART" id="SM00414">
    <property type="entry name" value="H2A"/>
    <property type="match status" value="1"/>
</dbReference>
<dbReference type="SUPFAM" id="SSF47113">
    <property type="entry name" value="Histone-fold"/>
    <property type="match status" value="1"/>
</dbReference>
<dbReference type="PROSITE" id="PS00046">
    <property type="entry name" value="HISTONE_H2A"/>
    <property type="match status" value="1"/>
</dbReference>
<protein>
    <recommendedName>
        <fullName>Histone H2A</fullName>
    </recommendedName>
</protein>